<gene>
    <name type="primary">sfaH</name>
    <name type="ordered locus">ECP_0299</name>
</gene>
<proteinExistence type="evidence at protein level"/>
<reference key="1">
    <citation type="journal article" date="1989" name="Mol. Microbiol.">
        <title>Analysis of genes coding for the sialic acid-binding adhesin and two other minor fimbrial subunits of the S-fimbrial adhesin determinant of Escherichia coli.</title>
        <authorList>
            <person name="Schmoll T."/>
            <person name="Hoschuetzky H."/>
            <person name="Morschhaeuser J."/>
            <person name="Lottspeich F."/>
            <person name="Jann K."/>
            <person name="Hacker J."/>
        </authorList>
    </citation>
    <scope>NUCLEOTIDE SEQUENCE [GENOMIC DNA]</scope>
    <scope>SUBCELLULAR LOCATION</scope>
    <scope>IDENTIFICATION IN FIMBRIAE COMPLEX</scope>
    <scope>DISRUPTION PHENOTYPE</scope>
</reference>
<reference key="2">
    <citation type="journal article" date="2001" name="Infect. Immun.">
        <title>S-fimbria-encoding determinant sfa(I) is located on pathogenicity island III(536) of uropathogenic Escherichia coli strain 536.</title>
        <authorList>
            <person name="Dobrindt U."/>
            <person name="Blum-Oehler G."/>
            <person name="Hartsch T."/>
            <person name="Gottschalk G."/>
            <person name="Ron E.Z."/>
            <person name="Fuenfstueck R."/>
            <person name="Hacker J."/>
        </authorList>
    </citation>
    <scope>SEQUENCE REVISION</scope>
</reference>
<reference key="3">
    <citation type="journal article" date="2002" name="Infect. Immun.">
        <title>Genetic structure and distribution of four pathogenicity islands (PAI I(536) to PAI IV(536)) of uropathogenic Escherichia coli strain 536.</title>
        <authorList>
            <person name="Dobrindt U."/>
            <person name="Blum-Oehler G."/>
            <person name="Nagy G."/>
            <person name="Schneider G."/>
            <person name="Johann A."/>
            <person name="Gottschalk G."/>
            <person name="Hacker J."/>
        </authorList>
    </citation>
    <scope>NUCLEOTIDE SEQUENCE [GENOMIC DNA]</scope>
</reference>
<reference key="4">
    <citation type="journal article" date="2006" name="Mol. Microbiol.">
        <title>Role of pathogenicity island-associated integrases in the genome plasticity of uropathogenic Escherichia coli strain 536.</title>
        <authorList>
            <person name="Hochhut B."/>
            <person name="Wilde C."/>
            <person name="Balling G."/>
            <person name="Middendorf B."/>
            <person name="Dobrindt U."/>
            <person name="Brzuszkiewicz E."/>
            <person name="Gottschalk G."/>
            <person name="Carniel E."/>
            <person name="Hacker J."/>
        </authorList>
    </citation>
    <scope>NUCLEOTIDE SEQUENCE [LARGE SCALE GENOMIC DNA]</scope>
    <source>
        <strain>536 / UPEC</strain>
    </source>
</reference>
<sequence length="299" mass="32032">MAYSQPSFALLCRNNQTGQEFNSGDTSFRVNVSPVVQYDKSISVLDLSQLVSCQNEDSTGQNYDYLKILKGSGFSPALDTKTYGRLDFTSRPTGYARQLPLQFDLQVTEAFYQYGVWKPFPAKLYLYPEPGVFGKVINNGDLLATLYVNKFSTKGQEAGERNFTWRFYATNDVHIQTGTCRVSSNNVKVDLPSYPGGPVTVPLTVRCDQTQSVSYTLSGPVTGSGNTVFANTAASGAGGVGVQLSDKAGPVPAGQPRSLGQVGSSPVSLGLKASYALTGQASLTPGAVQSVINVTFSYN</sequence>
<accession>P13431</accession>
<accession>Q0TL47</accession>
<name>SFAH_ECOL5</name>
<evidence type="ECO:0000269" key="1">
    <source>
    </source>
</evidence>
<evidence type="ECO:0000305" key="2"/>
<comment type="function">
    <text>Fimbriae (also called pili), polar filaments radiating from the surface of the bacterium to a length of 0.5-1.5 micrometers and numbering 100-300 per cell, enable bacteria to colonize the epithelium of specific host organs.</text>
</comment>
<comment type="function">
    <text>A minor fimbrial subunit. This protein is necessary for full expression of S-specific binding. S-fimbrial adhesins enable pathogenic E.coli causing urinary-tract infections or newborn meningitis to attach to glycoproteins terminating with alpha-sialic acid-(2-3)-beta-Gal.</text>
</comment>
<comment type="subcellular location">
    <subcellularLocation>
        <location evidence="1">Fimbrium</location>
    </subcellularLocation>
</comment>
<comment type="disruption phenotype">
    <text evidence="1">Deletion decreases hemagglutination and fimbriation levels.</text>
</comment>
<comment type="similarity">
    <text evidence="2">Belongs to the fimbrial protein family.</text>
</comment>
<organism>
    <name type="scientific">Escherichia coli O6:K15:H31 (strain 536 / UPEC)</name>
    <dbReference type="NCBI Taxonomy" id="362663"/>
    <lineage>
        <taxon>Bacteria</taxon>
        <taxon>Pseudomonadati</taxon>
        <taxon>Pseudomonadota</taxon>
        <taxon>Gammaproteobacteria</taxon>
        <taxon>Enterobacterales</taxon>
        <taxon>Enterobacteriaceae</taxon>
        <taxon>Escherichia</taxon>
    </lineage>
</organism>
<protein>
    <recommendedName>
        <fullName>S-fimbrial protein subunit SfaH</fullName>
    </recommendedName>
</protein>
<dbReference type="EMBL" id="X16664">
    <property type="protein sequence ID" value="CAA34654.2"/>
    <property type="molecule type" value="Genomic_DNA"/>
</dbReference>
<dbReference type="EMBL" id="CP000247">
    <property type="protein sequence ID" value="ABG68334.1"/>
    <property type="molecule type" value="Genomic_DNA"/>
</dbReference>
<dbReference type="PIR" id="S15927">
    <property type="entry name" value="S15927"/>
</dbReference>
<dbReference type="SMR" id="P13431"/>
<dbReference type="KEGG" id="ecp:ECP_0299"/>
<dbReference type="HOGENOM" id="CLU_080390_0_0_6"/>
<dbReference type="Proteomes" id="UP000009182">
    <property type="component" value="Chromosome"/>
</dbReference>
<dbReference type="GO" id="GO:0009289">
    <property type="term" value="C:pilus"/>
    <property type="evidence" value="ECO:0007669"/>
    <property type="project" value="UniProtKB-SubCell"/>
</dbReference>
<dbReference type="GO" id="GO:0043709">
    <property type="term" value="P:cell adhesion involved in single-species biofilm formation"/>
    <property type="evidence" value="ECO:0007669"/>
    <property type="project" value="TreeGrafter"/>
</dbReference>
<dbReference type="CDD" id="cd10466">
    <property type="entry name" value="FimH_man-bind"/>
    <property type="match status" value="1"/>
</dbReference>
<dbReference type="Gene3D" id="2.60.40.1090">
    <property type="entry name" value="Fimbrial-type adhesion domain"/>
    <property type="match status" value="2"/>
</dbReference>
<dbReference type="InterPro" id="IPR000259">
    <property type="entry name" value="Adhesion_dom_fimbrial"/>
</dbReference>
<dbReference type="InterPro" id="IPR036937">
    <property type="entry name" value="Adhesion_dom_fimbrial_sf"/>
</dbReference>
<dbReference type="InterPro" id="IPR008966">
    <property type="entry name" value="Adhesion_dom_sf"/>
</dbReference>
<dbReference type="InterPro" id="IPR050263">
    <property type="entry name" value="Bact_Fimbrial_Adh_Pro"/>
</dbReference>
<dbReference type="InterPro" id="IPR015243">
    <property type="entry name" value="FimH_man-bd"/>
</dbReference>
<dbReference type="PANTHER" id="PTHR33420">
    <property type="entry name" value="FIMBRIAL SUBUNIT ELFA-RELATED"/>
    <property type="match status" value="1"/>
</dbReference>
<dbReference type="PANTHER" id="PTHR33420:SF14">
    <property type="entry name" value="TYPE 1 FIMBRIN D-MANNOSE SPECIFIC ADHESIN"/>
    <property type="match status" value="1"/>
</dbReference>
<dbReference type="Pfam" id="PF00419">
    <property type="entry name" value="Fimbrial"/>
    <property type="match status" value="1"/>
</dbReference>
<dbReference type="Pfam" id="PF09160">
    <property type="entry name" value="FimH_man-bind"/>
    <property type="match status" value="1"/>
</dbReference>
<dbReference type="SUPFAM" id="SSF49401">
    <property type="entry name" value="Bacterial adhesins"/>
    <property type="match status" value="2"/>
</dbReference>
<feature type="chain" id="PRO_0000196350" description="S-fimbrial protein subunit SfaH">
    <location>
        <begin position="1"/>
        <end position="299"/>
    </location>
</feature>
<keyword id="KW-0281">Fimbrium</keyword>